<gene>
    <name evidence="1" type="primary">def</name>
    <name type="ordered locus">EcHS_A3480</name>
</gene>
<protein>
    <recommendedName>
        <fullName evidence="1">Peptide deformylase</fullName>
        <shortName evidence="1">PDF</shortName>
        <ecNumber evidence="1">3.5.1.88</ecNumber>
    </recommendedName>
    <alternativeName>
        <fullName evidence="1">Polypeptide deformylase</fullName>
    </alternativeName>
</protein>
<accession>A8A591</accession>
<comment type="function">
    <text evidence="1">Removes the formyl group from the N-terminal Met of newly synthesized proteins. Requires at least a dipeptide for an efficient rate of reaction. N-terminal L-methionine is a prerequisite for activity but the enzyme has broad specificity at other positions.</text>
</comment>
<comment type="catalytic activity">
    <reaction evidence="1">
        <text>N-terminal N-formyl-L-methionyl-[peptide] + H2O = N-terminal L-methionyl-[peptide] + formate</text>
        <dbReference type="Rhea" id="RHEA:24420"/>
        <dbReference type="Rhea" id="RHEA-COMP:10639"/>
        <dbReference type="Rhea" id="RHEA-COMP:10640"/>
        <dbReference type="ChEBI" id="CHEBI:15377"/>
        <dbReference type="ChEBI" id="CHEBI:15740"/>
        <dbReference type="ChEBI" id="CHEBI:49298"/>
        <dbReference type="ChEBI" id="CHEBI:64731"/>
        <dbReference type="EC" id="3.5.1.88"/>
    </reaction>
</comment>
<comment type="cofactor">
    <cofactor evidence="1">
        <name>Fe(2+)</name>
        <dbReference type="ChEBI" id="CHEBI:29033"/>
    </cofactor>
    <text evidence="1">Binds 1 Fe(2+) ion.</text>
</comment>
<comment type="similarity">
    <text evidence="1">Belongs to the polypeptide deformylase family.</text>
</comment>
<evidence type="ECO:0000255" key="1">
    <source>
        <dbReference type="HAMAP-Rule" id="MF_00163"/>
    </source>
</evidence>
<proteinExistence type="inferred from homology"/>
<feature type="chain" id="PRO_1000058242" description="Peptide deformylase">
    <location>
        <begin position="1"/>
        <end position="169"/>
    </location>
</feature>
<feature type="active site" evidence="1">
    <location>
        <position position="134"/>
    </location>
</feature>
<feature type="binding site" evidence="1">
    <location>
        <position position="91"/>
    </location>
    <ligand>
        <name>Fe cation</name>
        <dbReference type="ChEBI" id="CHEBI:24875"/>
    </ligand>
</feature>
<feature type="binding site" evidence="1">
    <location>
        <position position="133"/>
    </location>
    <ligand>
        <name>Fe cation</name>
        <dbReference type="ChEBI" id="CHEBI:24875"/>
    </ligand>
</feature>
<feature type="binding site" evidence="1">
    <location>
        <position position="137"/>
    </location>
    <ligand>
        <name>Fe cation</name>
        <dbReference type="ChEBI" id="CHEBI:24875"/>
    </ligand>
</feature>
<name>DEF_ECOHS</name>
<organism>
    <name type="scientific">Escherichia coli O9:H4 (strain HS)</name>
    <dbReference type="NCBI Taxonomy" id="331112"/>
    <lineage>
        <taxon>Bacteria</taxon>
        <taxon>Pseudomonadati</taxon>
        <taxon>Pseudomonadota</taxon>
        <taxon>Gammaproteobacteria</taxon>
        <taxon>Enterobacterales</taxon>
        <taxon>Enterobacteriaceae</taxon>
        <taxon>Escherichia</taxon>
    </lineage>
</organism>
<dbReference type="EC" id="3.5.1.88" evidence="1"/>
<dbReference type="EMBL" id="CP000802">
    <property type="protein sequence ID" value="ABV07695.1"/>
    <property type="molecule type" value="Genomic_DNA"/>
</dbReference>
<dbReference type="RefSeq" id="WP_000114984.1">
    <property type="nucleotide sequence ID" value="NC_009800.1"/>
</dbReference>
<dbReference type="BMRB" id="A8A591"/>
<dbReference type="SMR" id="A8A591"/>
<dbReference type="GeneID" id="89518132"/>
<dbReference type="KEGG" id="ecx:EcHS_A3480"/>
<dbReference type="HOGENOM" id="CLU_061901_2_1_6"/>
<dbReference type="GO" id="GO:0046872">
    <property type="term" value="F:metal ion binding"/>
    <property type="evidence" value="ECO:0007669"/>
    <property type="project" value="UniProtKB-KW"/>
</dbReference>
<dbReference type="GO" id="GO:0042586">
    <property type="term" value="F:peptide deformylase activity"/>
    <property type="evidence" value="ECO:0007669"/>
    <property type="project" value="UniProtKB-UniRule"/>
</dbReference>
<dbReference type="GO" id="GO:0043686">
    <property type="term" value="P:co-translational protein modification"/>
    <property type="evidence" value="ECO:0007669"/>
    <property type="project" value="TreeGrafter"/>
</dbReference>
<dbReference type="GO" id="GO:0006412">
    <property type="term" value="P:translation"/>
    <property type="evidence" value="ECO:0007669"/>
    <property type="project" value="UniProtKB-UniRule"/>
</dbReference>
<dbReference type="CDD" id="cd00487">
    <property type="entry name" value="Pep_deformylase"/>
    <property type="match status" value="1"/>
</dbReference>
<dbReference type="FunFam" id="3.90.45.10:FF:000001">
    <property type="entry name" value="Peptide deformylase"/>
    <property type="match status" value="1"/>
</dbReference>
<dbReference type="Gene3D" id="3.90.45.10">
    <property type="entry name" value="Peptide deformylase"/>
    <property type="match status" value="1"/>
</dbReference>
<dbReference type="HAMAP" id="MF_00163">
    <property type="entry name" value="Pep_deformylase"/>
    <property type="match status" value="1"/>
</dbReference>
<dbReference type="InterPro" id="IPR023635">
    <property type="entry name" value="Peptide_deformylase"/>
</dbReference>
<dbReference type="InterPro" id="IPR036821">
    <property type="entry name" value="Peptide_deformylase_sf"/>
</dbReference>
<dbReference type="NCBIfam" id="TIGR00079">
    <property type="entry name" value="pept_deformyl"/>
    <property type="match status" value="1"/>
</dbReference>
<dbReference type="NCBIfam" id="NF001159">
    <property type="entry name" value="PRK00150.1-3"/>
    <property type="match status" value="1"/>
</dbReference>
<dbReference type="PANTHER" id="PTHR10458">
    <property type="entry name" value="PEPTIDE DEFORMYLASE"/>
    <property type="match status" value="1"/>
</dbReference>
<dbReference type="PANTHER" id="PTHR10458:SF21">
    <property type="entry name" value="PEPTIDE DEFORMYLASE"/>
    <property type="match status" value="1"/>
</dbReference>
<dbReference type="Pfam" id="PF01327">
    <property type="entry name" value="Pep_deformylase"/>
    <property type="match status" value="1"/>
</dbReference>
<dbReference type="PIRSF" id="PIRSF004749">
    <property type="entry name" value="Pep_def"/>
    <property type="match status" value="1"/>
</dbReference>
<dbReference type="PRINTS" id="PR01576">
    <property type="entry name" value="PDEFORMYLASE"/>
</dbReference>
<dbReference type="SUPFAM" id="SSF56420">
    <property type="entry name" value="Peptide deformylase"/>
    <property type="match status" value="1"/>
</dbReference>
<keyword id="KW-0378">Hydrolase</keyword>
<keyword id="KW-0408">Iron</keyword>
<keyword id="KW-0479">Metal-binding</keyword>
<keyword id="KW-0648">Protein biosynthesis</keyword>
<sequence length="169" mass="19328">MSVLQVLHIPDERLRKVAKPVEEVNAEIQRIVDDMFETMYAEEGIGLAATQVDIHQRIIVIDVSENRDERLVLINPELLEKSGETGIEEGCLSIPEQRALVPRAEKVKIRALDRDGKPFELEADGLLAICIQHEMDHLVGKLFMDYLSPLKQQRIRQKVEKLDRLKARA</sequence>
<reference key="1">
    <citation type="journal article" date="2008" name="J. Bacteriol.">
        <title>The pangenome structure of Escherichia coli: comparative genomic analysis of E. coli commensal and pathogenic isolates.</title>
        <authorList>
            <person name="Rasko D.A."/>
            <person name="Rosovitz M.J."/>
            <person name="Myers G.S.A."/>
            <person name="Mongodin E.F."/>
            <person name="Fricke W.F."/>
            <person name="Gajer P."/>
            <person name="Crabtree J."/>
            <person name="Sebaihia M."/>
            <person name="Thomson N.R."/>
            <person name="Chaudhuri R."/>
            <person name="Henderson I.R."/>
            <person name="Sperandio V."/>
            <person name="Ravel J."/>
        </authorList>
    </citation>
    <scope>NUCLEOTIDE SEQUENCE [LARGE SCALE GENOMIC DNA]</scope>
    <source>
        <strain>HS</strain>
    </source>
</reference>